<gene>
    <name type="ordered locus">Nham_1404</name>
</gene>
<feature type="chain" id="PRO_1000044798" description="UPF0260 protein Nham_1404">
    <location>
        <begin position="1"/>
        <end position="171"/>
    </location>
</feature>
<keyword id="KW-1185">Reference proteome</keyword>
<name>Y1404_NITHX</name>
<proteinExistence type="inferred from homology"/>
<accession>Q1QNH1</accession>
<organism>
    <name type="scientific">Nitrobacter hamburgensis (strain DSM 10229 / NCIMB 13809 / X14)</name>
    <dbReference type="NCBI Taxonomy" id="323097"/>
    <lineage>
        <taxon>Bacteria</taxon>
        <taxon>Pseudomonadati</taxon>
        <taxon>Pseudomonadota</taxon>
        <taxon>Alphaproteobacteria</taxon>
        <taxon>Hyphomicrobiales</taxon>
        <taxon>Nitrobacteraceae</taxon>
        <taxon>Nitrobacter</taxon>
    </lineage>
</organism>
<sequence length="171" mass="19583">MTQRPERPSEQDGFFWKTKTLEQMSSSEWESLCDGCARCCLEKLEDEDTGDIYFTHVSCRLLDAGLCACKDYANRSEQVSDCVRLTPDNVRTLNWLPPSCGYRLVAEGRDLYWWHPLISGDPNTVHEAGVSVRGRVRGTEDEIPDSELEDHIAQWPVRLPKRAQLKKPPRS</sequence>
<protein>
    <recommendedName>
        <fullName evidence="1">UPF0260 protein Nham_1404</fullName>
    </recommendedName>
</protein>
<dbReference type="EMBL" id="CP000319">
    <property type="protein sequence ID" value="ABE62226.1"/>
    <property type="molecule type" value="Genomic_DNA"/>
</dbReference>
<dbReference type="RefSeq" id="WP_011509917.1">
    <property type="nucleotide sequence ID" value="NC_007964.1"/>
</dbReference>
<dbReference type="STRING" id="323097.Nham_1404"/>
<dbReference type="KEGG" id="nha:Nham_1404"/>
<dbReference type="eggNOG" id="COG2983">
    <property type="taxonomic scope" value="Bacteria"/>
</dbReference>
<dbReference type="HOGENOM" id="CLU_109769_0_0_5"/>
<dbReference type="OrthoDB" id="9786855at2"/>
<dbReference type="Proteomes" id="UP000001953">
    <property type="component" value="Chromosome"/>
</dbReference>
<dbReference type="HAMAP" id="MF_00676">
    <property type="entry name" value="UPF0260"/>
    <property type="match status" value="1"/>
</dbReference>
<dbReference type="InterPro" id="IPR005358">
    <property type="entry name" value="Puta_zinc/iron-chelating_dom"/>
</dbReference>
<dbReference type="InterPro" id="IPR008228">
    <property type="entry name" value="UCP006173"/>
</dbReference>
<dbReference type="NCBIfam" id="NF003501">
    <property type="entry name" value="PRK05170.1-5"/>
    <property type="match status" value="1"/>
</dbReference>
<dbReference type="NCBIfam" id="NF003507">
    <property type="entry name" value="PRK05170.2-5"/>
    <property type="match status" value="1"/>
</dbReference>
<dbReference type="PANTHER" id="PTHR37421">
    <property type="entry name" value="UPF0260 PROTEIN YCGN"/>
    <property type="match status" value="1"/>
</dbReference>
<dbReference type="PANTHER" id="PTHR37421:SF1">
    <property type="entry name" value="UPF0260 PROTEIN YCGN"/>
    <property type="match status" value="1"/>
</dbReference>
<dbReference type="Pfam" id="PF03692">
    <property type="entry name" value="CxxCxxCC"/>
    <property type="match status" value="1"/>
</dbReference>
<dbReference type="PIRSF" id="PIRSF006173">
    <property type="entry name" value="UCP006173"/>
    <property type="match status" value="1"/>
</dbReference>
<evidence type="ECO:0000255" key="1">
    <source>
        <dbReference type="HAMAP-Rule" id="MF_00676"/>
    </source>
</evidence>
<comment type="similarity">
    <text evidence="1">Belongs to the UPF0260 family.</text>
</comment>
<reference key="1">
    <citation type="submission" date="2006-03" db="EMBL/GenBank/DDBJ databases">
        <title>Complete sequence of chromosome of Nitrobacter hamburgensis X14.</title>
        <authorList>
            <consortium name="US DOE Joint Genome Institute"/>
            <person name="Copeland A."/>
            <person name="Lucas S."/>
            <person name="Lapidus A."/>
            <person name="Barry K."/>
            <person name="Detter J.C."/>
            <person name="Glavina del Rio T."/>
            <person name="Hammon N."/>
            <person name="Israni S."/>
            <person name="Dalin E."/>
            <person name="Tice H."/>
            <person name="Pitluck S."/>
            <person name="Chain P."/>
            <person name="Malfatti S."/>
            <person name="Shin M."/>
            <person name="Vergez L."/>
            <person name="Schmutz J."/>
            <person name="Larimer F."/>
            <person name="Land M."/>
            <person name="Hauser L."/>
            <person name="Kyrpides N."/>
            <person name="Ivanova N."/>
            <person name="Ward B."/>
            <person name="Arp D."/>
            <person name="Klotz M."/>
            <person name="Stein L."/>
            <person name="O'Mullan G."/>
            <person name="Starkenburg S."/>
            <person name="Sayavedra L."/>
            <person name="Poret-Peterson A.T."/>
            <person name="Gentry M.E."/>
            <person name="Bruce D."/>
            <person name="Richardson P."/>
        </authorList>
    </citation>
    <scope>NUCLEOTIDE SEQUENCE [LARGE SCALE GENOMIC DNA]</scope>
    <source>
        <strain>DSM 10229 / NCIMB 13809 / X14</strain>
    </source>
</reference>